<reference key="1">
    <citation type="journal article" date="2002" name="J. Bacteriol.">
        <title>Whole-genome comparison of Mycobacterium tuberculosis clinical and laboratory strains.</title>
        <authorList>
            <person name="Fleischmann R.D."/>
            <person name="Alland D."/>
            <person name="Eisen J.A."/>
            <person name="Carpenter L."/>
            <person name="White O."/>
            <person name="Peterson J.D."/>
            <person name="DeBoy R.T."/>
            <person name="Dodson R.J."/>
            <person name="Gwinn M.L."/>
            <person name="Haft D.H."/>
            <person name="Hickey E.K."/>
            <person name="Kolonay J.F."/>
            <person name="Nelson W.C."/>
            <person name="Umayam L.A."/>
            <person name="Ermolaeva M.D."/>
            <person name="Salzberg S.L."/>
            <person name="Delcher A."/>
            <person name="Utterback T.R."/>
            <person name="Weidman J.F."/>
            <person name="Khouri H.M."/>
            <person name="Gill J."/>
            <person name="Mikula A."/>
            <person name="Bishai W."/>
            <person name="Jacobs W.R. Jr."/>
            <person name="Venter J.C."/>
            <person name="Fraser C.M."/>
        </authorList>
    </citation>
    <scope>NUCLEOTIDE SEQUENCE [LARGE SCALE GENOMIC DNA]</scope>
    <source>
        <strain>CDC 1551 / Oshkosh</strain>
    </source>
</reference>
<proteinExistence type="inferred from homology"/>
<name>MRAY_MYCTO</name>
<gene>
    <name evidence="1" type="primary">mraY</name>
    <name type="synonym">murX</name>
    <name type="ordered locus">MT2215</name>
</gene>
<feature type="chain" id="PRO_0000427230" description="Phospho-N-acetylmuramoyl-pentapeptide-transferase">
    <location>
        <begin position="1"/>
        <end position="359"/>
    </location>
</feature>
<feature type="transmembrane region" description="Helical" evidence="1">
    <location>
        <begin position="3"/>
        <end position="23"/>
    </location>
</feature>
<feature type="transmembrane region" description="Helical" evidence="1">
    <location>
        <begin position="55"/>
        <end position="75"/>
    </location>
</feature>
<feature type="transmembrane region" description="Helical" evidence="1">
    <location>
        <begin position="80"/>
        <end position="100"/>
    </location>
</feature>
<feature type="transmembrane region" description="Helical" evidence="1">
    <location>
        <begin position="117"/>
        <end position="137"/>
    </location>
</feature>
<feature type="transmembrane region" description="Helical" evidence="1">
    <location>
        <begin position="156"/>
        <end position="176"/>
    </location>
</feature>
<feature type="transmembrane region" description="Helical" evidence="1">
    <location>
        <begin position="187"/>
        <end position="207"/>
    </location>
</feature>
<feature type="transmembrane region" description="Helical" evidence="1">
    <location>
        <begin position="231"/>
        <end position="251"/>
    </location>
</feature>
<feature type="transmembrane region" description="Helical" evidence="1">
    <location>
        <begin position="255"/>
        <end position="275"/>
    </location>
</feature>
<feature type="transmembrane region" description="Helical" evidence="1">
    <location>
        <begin position="280"/>
        <end position="300"/>
    </location>
</feature>
<feature type="transmembrane region" description="Helical" evidence="1">
    <location>
        <begin position="334"/>
        <end position="354"/>
    </location>
</feature>
<evidence type="ECO:0000255" key="1">
    <source>
        <dbReference type="HAMAP-Rule" id="MF_00038"/>
    </source>
</evidence>
<keyword id="KW-0131">Cell cycle</keyword>
<keyword id="KW-0132">Cell division</keyword>
<keyword id="KW-1003">Cell membrane</keyword>
<keyword id="KW-0133">Cell shape</keyword>
<keyword id="KW-0961">Cell wall biogenesis/degradation</keyword>
<keyword id="KW-0460">Magnesium</keyword>
<keyword id="KW-0472">Membrane</keyword>
<keyword id="KW-0479">Metal-binding</keyword>
<keyword id="KW-0573">Peptidoglycan synthesis</keyword>
<keyword id="KW-1185">Reference proteome</keyword>
<keyword id="KW-0808">Transferase</keyword>
<keyword id="KW-0812">Transmembrane</keyword>
<keyword id="KW-1133">Transmembrane helix</keyword>
<dbReference type="EC" id="2.7.8.13" evidence="1"/>
<dbReference type="EMBL" id="AE000516">
    <property type="protein sequence ID" value="AAK46499.1"/>
    <property type="molecule type" value="Genomic_DNA"/>
</dbReference>
<dbReference type="PIR" id="H70579">
    <property type="entry name" value="H70579"/>
</dbReference>
<dbReference type="RefSeq" id="WP_003411171.1">
    <property type="nucleotide sequence ID" value="NZ_KK341227.1"/>
</dbReference>
<dbReference type="SMR" id="P9WMW6"/>
<dbReference type="KEGG" id="mtc:MT2215"/>
<dbReference type="PATRIC" id="fig|83331.31.peg.2388"/>
<dbReference type="HOGENOM" id="CLU_023982_0_1_11"/>
<dbReference type="UniPathway" id="UPA00219"/>
<dbReference type="Proteomes" id="UP000001020">
    <property type="component" value="Chromosome"/>
</dbReference>
<dbReference type="GO" id="GO:0005886">
    <property type="term" value="C:plasma membrane"/>
    <property type="evidence" value="ECO:0007669"/>
    <property type="project" value="UniProtKB-SubCell"/>
</dbReference>
<dbReference type="GO" id="GO:0046872">
    <property type="term" value="F:metal ion binding"/>
    <property type="evidence" value="ECO:0007669"/>
    <property type="project" value="UniProtKB-KW"/>
</dbReference>
<dbReference type="GO" id="GO:0008963">
    <property type="term" value="F:phospho-N-acetylmuramoyl-pentapeptide-transferase activity"/>
    <property type="evidence" value="ECO:0007669"/>
    <property type="project" value="UniProtKB-UniRule"/>
</dbReference>
<dbReference type="GO" id="GO:0051992">
    <property type="term" value="F:UDP-N-acetylmuramoyl-L-alanyl-D-glutamyl-meso-2,6-diaminopimelyl-D-alanyl-D-alanine:undecaprenyl-phosphate transferase activity"/>
    <property type="evidence" value="ECO:0007669"/>
    <property type="project" value="RHEA"/>
</dbReference>
<dbReference type="GO" id="GO:0051301">
    <property type="term" value="P:cell division"/>
    <property type="evidence" value="ECO:0007669"/>
    <property type="project" value="UniProtKB-KW"/>
</dbReference>
<dbReference type="GO" id="GO:0071555">
    <property type="term" value="P:cell wall organization"/>
    <property type="evidence" value="ECO:0007669"/>
    <property type="project" value="UniProtKB-KW"/>
</dbReference>
<dbReference type="GO" id="GO:0009252">
    <property type="term" value="P:peptidoglycan biosynthetic process"/>
    <property type="evidence" value="ECO:0007669"/>
    <property type="project" value="UniProtKB-UniRule"/>
</dbReference>
<dbReference type="GO" id="GO:0008360">
    <property type="term" value="P:regulation of cell shape"/>
    <property type="evidence" value="ECO:0007669"/>
    <property type="project" value="UniProtKB-KW"/>
</dbReference>
<dbReference type="CDD" id="cd06852">
    <property type="entry name" value="GT_MraY"/>
    <property type="match status" value="1"/>
</dbReference>
<dbReference type="HAMAP" id="MF_00038">
    <property type="entry name" value="MraY"/>
    <property type="match status" value="1"/>
</dbReference>
<dbReference type="InterPro" id="IPR000715">
    <property type="entry name" value="Glycosyl_transferase_4"/>
</dbReference>
<dbReference type="InterPro" id="IPR003524">
    <property type="entry name" value="PNAcMuramoyl-5peptid_Trfase"/>
</dbReference>
<dbReference type="InterPro" id="IPR018480">
    <property type="entry name" value="PNAcMuramoyl-5peptid_Trfase_CS"/>
</dbReference>
<dbReference type="NCBIfam" id="TIGR00445">
    <property type="entry name" value="mraY"/>
    <property type="match status" value="1"/>
</dbReference>
<dbReference type="PANTHER" id="PTHR22926">
    <property type="entry name" value="PHOSPHO-N-ACETYLMURAMOYL-PENTAPEPTIDE-TRANSFERASE"/>
    <property type="match status" value="1"/>
</dbReference>
<dbReference type="PANTHER" id="PTHR22926:SF5">
    <property type="entry name" value="PHOSPHO-N-ACETYLMURAMOYL-PENTAPEPTIDE-TRANSFERASE HOMOLOG"/>
    <property type="match status" value="1"/>
</dbReference>
<dbReference type="Pfam" id="PF00953">
    <property type="entry name" value="Glycos_transf_4"/>
    <property type="match status" value="1"/>
</dbReference>
<dbReference type="Pfam" id="PF10555">
    <property type="entry name" value="MraY_sig1"/>
    <property type="match status" value="1"/>
</dbReference>
<dbReference type="PROSITE" id="PS01347">
    <property type="entry name" value="MRAY_1"/>
    <property type="match status" value="1"/>
</dbReference>
<dbReference type="PROSITE" id="PS01348">
    <property type="entry name" value="MRAY_2"/>
    <property type="match status" value="1"/>
</dbReference>
<protein>
    <recommendedName>
        <fullName evidence="1">Phospho-N-acetylmuramoyl-pentapeptide-transferase</fullName>
        <ecNumber evidence="1">2.7.8.13</ecNumber>
    </recommendedName>
    <alternativeName>
        <fullName evidence="1">UDP-MurNAc-pentapeptide phosphotransferase</fullName>
    </alternativeName>
</protein>
<comment type="function">
    <text evidence="1">Catalyzes the initial step of the lipid cycle reactions in the biosynthesis of the cell wall peptidoglycan: transfers peptidoglycan precursor phospho-MurNAc-pentapeptide from UDP-MurNAc-pentapeptide onto the lipid carrier undecaprenyl phosphate, yielding undecaprenyl-pyrophosphoryl-MurNAc-pentapeptide, known as lipid I.</text>
</comment>
<comment type="catalytic activity">
    <reaction evidence="1">
        <text>UDP-N-acetyl-alpha-D-muramoyl-L-alanyl-gamma-D-glutamyl-meso-2,6-diaminopimeloyl-D-alanyl-D-alanine + di-trans,octa-cis-undecaprenyl phosphate = di-trans,octa-cis-undecaprenyl diphospho-N-acetyl-alpha-D-muramoyl-L-alanyl-D-glutamyl-meso-2,6-diaminopimeloyl-D-alanyl-D-alanine + UMP</text>
        <dbReference type="Rhea" id="RHEA:28386"/>
        <dbReference type="ChEBI" id="CHEBI:57865"/>
        <dbReference type="ChEBI" id="CHEBI:60392"/>
        <dbReference type="ChEBI" id="CHEBI:61386"/>
        <dbReference type="ChEBI" id="CHEBI:61387"/>
        <dbReference type="EC" id="2.7.8.13"/>
    </reaction>
</comment>
<comment type="cofactor">
    <cofactor evidence="1">
        <name>Mg(2+)</name>
        <dbReference type="ChEBI" id="CHEBI:18420"/>
    </cofactor>
</comment>
<comment type="pathway">
    <text evidence="1">Cell wall biogenesis; peptidoglycan biosynthesis.</text>
</comment>
<comment type="subcellular location">
    <subcellularLocation>
        <location evidence="1">Cell membrane</location>
        <topology evidence="1">Multi-pass membrane protein</topology>
    </subcellularLocation>
</comment>
<comment type="similarity">
    <text evidence="1">Belongs to the glycosyltransferase 4 family. MraY subfamily.</text>
</comment>
<organism>
    <name type="scientific">Mycobacterium tuberculosis (strain CDC 1551 / Oshkosh)</name>
    <dbReference type="NCBI Taxonomy" id="83331"/>
    <lineage>
        <taxon>Bacteria</taxon>
        <taxon>Bacillati</taxon>
        <taxon>Actinomycetota</taxon>
        <taxon>Actinomycetes</taxon>
        <taxon>Mycobacteriales</taxon>
        <taxon>Mycobacteriaceae</taxon>
        <taxon>Mycobacterium</taxon>
        <taxon>Mycobacterium tuberculosis complex</taxon>
    </lineage>
</organism>
<accession>P9WMW6</accession>
<accession>L0TBH3</accession>
<accession>O06221</accession>
<accession>P64259</accession>
<sequence length="359" mass="37713">MRQILIAVAVAVTVSILLTPVLIRLFTKQGFGHQIREDGPPSHHTKRGTPSMGGVAILAGIWAGYLGAHLAGLAFDGEGIGASGLLVLGLATALGGVGFIDDLIKIRRSRNLGLNKTAKTVGQITSAVLFGVLVLQFRNAAGLTPGSADLSYVREIATVTLAPVLFVLFCVVIVSAWSNAVNFTDGLDGLAAGTMAMVTAAYVLITFWQYRNACVTAPGLGCYNVRDPLDLALIAAATAGACIGFLWWNAAPAKIFMGDTGSLALGGVIAGLSVTSRTEILAVVLGALFVAEITSVVLQILTFRTTGRRMFRMAPFHHHFELVGWAETTVIIRFWLLTAITCGLGVALFYGEWLAAVGA</sequence>